<name>RL14E_HYPBU</name>
<gene>
    <name evidence="1" type="primary">rpl14e</name>
    <name type="ordered locus">Hbut_1328</name>
</gene>
<protein>
    <recommendedName>
        <fullName evidence="1">Large ribosomal subunit protein eL14</fullName>
    </recommendedName>
    <alternativeName>
        <fullName evidence="2">50S ribosomal protein L14e</fullName>
    </alternativeName>
</protein>
<dbReference type="EMBL" id="CP000493">
    <property type="protein sequence ID" value="ABM81158.1"/>
    <property type="molecule type" value="Genomic_DNA"/>
</dbReference>
<dbReference type="RefSeq" id="WP_011822476.1">
    <property type="nucleotide sequence ID" value="NC_008818.1"/>
</dbReference>
<dbReference type="SMR" id="A2BME7"/>
<dbReference type="STRING" id="415426.Hbut_1328"/>
<dbReference type="EnsemblBacteria" id="ABM81158">
    <property type="protein sequence ID" value="ABM81158"/>
    <property type="gene ID" value="Hbut_1328"/>
</dbReference>
<dbReference type="GeneID" id="4781786"/>
<dbReference type="KEGG" id="hbu:Hbut_1328"/>
<dbReference type="eggNOG" id="arCOG04167">
    <property type="taxonomic scope" value="Archaea"/>
</dbReference>
<dbReference type="HOGENOM" id="CLU_183474_0_0_2"/>
<dbReference type="OrthoDB" id="63594at2157"/>
<dbReference type="Proteomes" id="UP000002593">
    <property type="component" value="Chromosome"/>
</dbReference>
<dbReference type="GO" id="GO:0022625">
    <property type="term" value="C:cytosolic large ribosomal subunit"/>
    <property type="evidence" value="ECO:0007669"/>
    <property type="project" value="TreeGrafter"/>
</dbReference>
<dbReference type="GO" id="GO:0003723">
    <property type="term" value="F:RNA binding"/>
    <property type="evidence" value="ECO:0007669"/>
    <property type="project" value="InterPro"/>
</dbReference>
<dbReference type="GO" id="GO:0003735">
    <property type="term" value="F:structural constituent of ribosome"/>
    <property type="evidence" value="ECO:0007669"/>
    <property type="project" value="InterPro"/>
</dbReference>
<dbReference type="GO" id="GO:0042273">
    <property type="term" value="P:ribosomal large subunit biogenesis"/>
    <property type="evidence" value="ECO:0007669"/>
    <property type="project" value="TreeGrafter"/>
</dbReference>
<dbReference type="GO" id="GO:0006412">
    <property type="term" value="P:translation"/>
    <property type="evidence" value="ECO:0007669"/>
    <property type="project" value="UniProtKB-UniRule"/>
</dbReference>
<dbReference type="CDD" id="cd06088">
    <property type="entry name" value="KOW_RPL14"/>
    <property type="match status" value="1"/>
</dbReference>
<dbReference type="FunFam" id="2.30.30.30:FF:000045">
    <property type="entry name" value="50S ribosomal protein L14e"/>
    <property type="match status" value="1"/>
</dbReference>
<dbReference type="Gene3D" id="2.30.30.30">
    <property type="match status" value="1"/>
</dbReference>
<dbReference type="HAMAP" id="MF_00721">
    <property type="entry name" value="Ribosomal_eL14"/>
    <property type="match status" value="1"/>
</dbReference>
<dbReference type="InterPro" id="IPR005824">
    <property type="entry name" value="KOW"/>
</dbReference>
<dbReference type="InterPro" id="IPR014722">
    <property type="entry name" value="Rib_uL2_dom2"/>
</dbReference>
<dbReference type="InterPro" id="IPR039660">
    <property type="entry name" value="Ribosomal_eL14"/>
</dbReference>
<dbReference type="InterPro" id="IPR023651">
    <property type="entry name" value="Ribosomal_eL14_arc"/>
</dbReference>
<dbReference type="InterPro" id="IPR041985">
    <property type="entry name" value="Ribosomal_eL14_KOW"/>
</dbReference>
<dbReference type="InterPro" id="IPR008991">
    <property type="entry name" value="Translation_prot_SH3-like_sf"/>
</dbReference>
<dbReference type="NCBIfam" id="NF003320">
    <property type="entry name" value="PRK04333.1"/>
    <property type="match status" value="1"/>
</dbReference>
<dbReference type="PANTHER" id="PTHR11127">
    <property type="entry name" value="60S RIBOSOMAL PROTEIN L14"/>
    <property type="match status" value="1"/>
</dbReference>
<dbReference type="PANTHER" id="PTHR11127:SF2">
    <property type="entry name" value="LARGE RIBOSOMAL SUBUNIT PROTEIN EL14"/>
    <property type="match status" value="1"/>
</dbReference>
<dbReference type="Pfam" id="PF00467">
    <property type="entry name" value="KOW"/>
    <property type="match status" value="1"/>
</dbReference>
<dbReference type="SUPFAM" id="SSF50104">
    <property type="entry name" value="Translation proteins SH3-like domain"/>
    <property type="match status" value="1"/>
</dbReference>
<keyword id="KW-1185">Reference proteome</keyword>
<keyword id="KW-0687">Ribonucleoprotein</keyword>
<keyword id="KW-0689">Ribosomal protein</keyword>
<evidence type="ECO:0000255" key="1">
    <source>
        <dbReference type="HAMAP-Rule" id="MF_00721"/>
    </source>
</evidence>
<evidence type="ECO:0000305" key="2"/>
<reference key="1">
    <citation type="journal article" date="2007" name="Archaea">
        <title>The genome of Hyperthermus butylicus: a sulfur-reducing, peptide fermenting, neutrophilic Crenarchaeote growing up to 108 degrees C.</title>
        <authorList>
            <person name="Bruegger K."/>
            <person name="Chen L."/>
            <person name="Stark M."/>
            <person name="Zibat A."/>
            <person name="Redder P."/>
            <person name="Ruepp A."/>
            <person name="Awayez M."/>
            <person name="She Q."/>
            <person name="Garrett R.A."/>
            <person name="Klenk H.-P."/>
        </authorList>
    </citation>
    <scope>NUCLEOTIDE SEQUENCE [LARGE SCALE GENOMIC DNA]</scope>
    <source>
        <strain>DSM 5456 / JCM 9403 / PLM1-5</strain>
    </source>
</reference>
<comment type="similarity">
    <text evidence="1">Belongs to the eukaryotic ribosomal protein eL14 family.</text>
</comment>
<sequence length="98" mass="10972">MPAIEVGRLCVKTRGREAGRKCVIVEIIDDNFVLITGPKDVSGVKRRRANINHIEVLPEKINIQPGASDEEVKKALEEAGLLDFMRERVRIELKPGLL</sequence>
<proteinExistence type="inferred from homology"/>
<organism>
    <name type="scientific">Hyperthermus butylicus (strain DSM 5456 / JCM 9403 / PLM1-5)</name>
    <dbReference type="NCBI Taxonomy" id="415426"/>
    <lineage>
        <taxon>Archaea</taxon>
        <taxon>Thermoproteota</taxon>
        <taxon>Thermoprotei</taxon>
        <taxon>Desulfurococcales</taxon>
        <taxon>Pyrodictiaceae</taxon>
        <taxon>Hyperthermus</taxon>
    </lineage>
</organism>
<feature type="chain" id="PRO_1000045817" description="Large ribosomal subunit protein eL14">
    <location>
        <begin position="1"/>
        <end position="98"/>
    </location>
</feature>
<accession>A2BME7</accession>